<sequence>MSTNKKTIVWFRRDLRIEDNPALAAAAHEGSVFPVFIWCPEEEGQFYPGRASRWWMKQSLAHLRQSLKALGSELTLIKTHSTVSAILDCVRATGATKVVFNHLYDPVSLVRDHTVKEKLVERGISVQSYNGDLCMSPGRYTVKRANLLLVLILTGKKCLDMSVESVVLPPPWRLMPLSAAETVWACSVEELGLENEAEKPSNALLTRAWSPGWSNADKILNEFIEKQLIDYAKNSKKVVGNSTSLLSPYLHFGEISVRRVFQCARMKQIIWARDKNGEGEESADLFLRGIGLRDYSRIICFNFPFTHEQSLLSHLRFFPWDADVDKFKAWRQGRTGYPLVDAGMRELWATGWMHNRIRVIVSSFAVKFLLLPWKWGMKYFWDTLLDADLECDIIGWQYISGSLPDGHELDRLDNPAIQGAKYDPEGEYIRQWLPELARLPTEWIHHPWDAPLTVLKASGVELGTNYAKPIVVIDTARELLTKAISRTREAQIMIGACGDEM</sequence>
<protein>
    <recommendedName>
        <fullName>Cryptochrome-1</fullName>
    </recommendedName>
    <alternativeName>
        <fullName>Blue light photoreceptor</fullName>
    </alternativeName>
</protein>
<gene>
    <name type="primary">PHR1</name>
</gene>
<reference key="1">
    <citation type="journal article" date="1993" name="Plant J.">
        <title>A plant gene for photolyase: an enzyme catalyzing the repair of UV-light-induced DNA damage.</title>
        <authorList>
            <person name="Batschauer A."/>
        </authorList>
    </citation>
    <scope>NUCLEOTIDE SEQUENCE [MRNA]</scope>
</reference>
<reference key="2">
    <citation type="journal article" date="1995" name="Biochemistry">
        <title>Putative blue-light photoreceptors from Arabidopsis thaliana and Sinapis alba with a high degree of sequence homology to DNA photolyase contain the two photolyase cofactors but lack DNA repair activity.</title>
        <authorList>
            <person name="Malhotra K."/>
            <person name="Kim S.-T."/>
            <person name="Batschauer A."/>
            <person name="Dawut L."/>
            <person name="Sancar A."/>
        </authorList>
    </citation>
    <scope>FUNCTION</scope>
</reference>
<proteinExistence type="evidence at transcript level"/>
<name>CRY1_SINAL</name>
<organism>
    <name type="scientific">Sinapis alba</name>
    <name type="common">White mustard</name>
    <name type="synonym">Brassica hirta</name>
    <dbReference type="NCBI Taxonomy" id="3728"/>
    <lineage>
        <taxon>Eukaryota</taxon>
        <taxon>Viridiplantae</taxon>
        <taxon>Streptophyta</taxon>
        <taxon>Embryophyta</taxon>
        <taxon>Tracheophyta</taxon>
        <taxon>Spermatophyta</taxon>
        <taxon>Magnoliopsida</taxon>
        <taxon>eudicotyledons</taxon>
        <taxon>Gunneridae</taxon>
        <taxon>Pentapetalae</taxon>
        <taxon>rosids</taxon>
        <taxon>malvids</taxon>
        <taxon>Brassicales</taxon>
        <taxon>Brassicaceae</taxon>
        <taxon>Brassiceae</taxon>
        <taxon>Sinapis</taxon>
    </lineage>
</organism>
<accession>P40115</accession>
<feature type="chain" id="PRO_0000085123" description="Cryptochrome-1">
    <location>
        <begin position="1"/>
        <end position="501"/>
    </location>
</feature>
<feature type="domain" description="Photolyase/cryptochrome alpha/beta">
    <location>
        <begin position="5"/>
        <end position="134"/>
    </location>
</feature>
<feature type="binding site" evidence="1">
    <location>
        <position position="231"/>
    </location>
    <ligand>
        <name>FAD</name>
        <dbReference type="ChEBI" id="CHEBI:57692"/>
    </ligand>
</feature>
<feature type="binding site" evidence="1">
    <location>
        <begin position="243"/>
        <end position="247"/>
    </location>
    <ligand>
        <name>FAD</name>
        <dbReference type="ChEBI" id="CHEBI:57692"/>
    </ligand>
</feature>
<feature type="binding site" evidence="1">
    <location>
        <position position="356"/>
    </location>
    <ligand>
        <name>ATP</name>
        <dbReference type="ChEBI" id="CHEBI:30616"/>
    </ligand>
</feature>
<feature type="binding site" evidence="1">
    <location>
        <position position="386"/>
    </location>
    <ligand>
        <name>FAD</name>
        <dbReference type="ChEBI" id="CHEBI:57692"/>
    </ligand>
</feature>
<feature type="binding site" evidence="1">
    <location>
        <position position="388"/>
    </location>
    <ligand>
        <name>FAD</name>
        <dbReference type="ChEBI" id="CHEBI:57692"/>
    </ligand>
</feature>
<feature type="binding site" evidence="1">
    <location>
        <position position="405"/>
    </location>
    <ligand>
        <name>ATP</name>
        <dbReference type="ChEBI" id="CHEBI:30616"/>
    </ligand>
</feature>
<dbReference type="EMBL" id="X72019">
    <property type="protein sequence ID" value="CAA50898.1"/>
    <property type="molecule type" value="mRNA"/>
</dbReference>
<dbReference type="PIR" id="S48120">
    <property type="entry name" value="S48120"/>
</dbReference>
<dbReference type="SMR" id="P40115"/>
<dbReference type="GO" id="GO:0005737">
    <property type="term" value="C:cytoplasm"/>
    <property type="evidence" value="ECO:0007669"/>
    <property type="project" value="TreeGrafter"/>
</dbReference>
<dbReference type="GO" id="GO:0005634">
    <property type="term" value="C:nucleus"/>
    <property type="evidence" value="ECO:0007669"/>
    <property type="project" value="TreeGrafter"/>
</dbReference>
<dbReference type="GO" id="GO:0005524">
    <property type="term" value="F:ATP binding"/>
    <property type="evidence" value="ECO:0007669"/>
    <property type="project" value="UniProtKB-KW"/>
</dbReference>
<dbReference type="GO" id="GO:0009882">
    <property type="term" value="F:blue light photoreceptor activity"/>
    <property type="evidence" value="ECO:0007669"/>
    <property type="project" value="InterPro"/>
</dbReference>
<dbReference type="GO" id="GO:0003904">
    <property type="term" value="F:deoxyribodipyrimidine photo-lyase activity"/>
    <property type="evidence" value="ECO:0007669"/>
    <property type="project" value="TreeGrafter"/>
</dbReference>
<dbReference type="GO" id="GO:0003677">
    <property type="term" value="F:DNA binding"/>
    <property type="evidence" value="ECO:0007669"/>
    <property type="project" value="TreeGrafter"/>
</dbReference>
<dbReference type="GO" id="GO:0071949">
    <property type="term" value="F:FAD binding"/>
    <property type="evidence" value="ECO:0007669"/>
    <property type="project" value="TreeGrafter"/>
</dbReference>
<dbReference type="GO" id="GO:0032922">
    <property type="term" value="P:circadian regulation of gene expression"/>
    <property type="evidence" value="ECO:0007669"/>
    <property type="project" value="TreeGrafter"/>
</dbReference>
<dbReference type="GO" id="GO:0043153">
    <property type="term" value="P:entrainment of circadian clock by photoperiod"/>
    <property type="evidence" value="ECO:0007669"/>
    <property type="project" value="TreeGrafter"/>
</dbReference>
<dbReference type="GO" id="GO:0006139">
    <property type="term" value="P:nucleobase-containing compound metabolic process"/>
    <property type="evidence" value="ECO:0007669"/>
    <property type="project" value="UniProtKB-ARBA"/>
</dbReference>
<dbReference type="GO" id="GO:0006950">
    <property type="term" value="P:response to stress"/>
    <property type="evidence" value="ECO:0007669"/>
    <property type="project" value="UniProtKB-ARBA"/>
</dbReference>
<dbReference type="FunFam" id="3.40.50.620:FF:000193">
    <property type="entry name" value="Cryptochrome 1"/>
    <property type="match status" value="1"/>
</dbReference>
<dbReference type="FunFam" id="1.10.579.10:FF:000003">
    <property type="entry name" value="Deoxyribodipyrimidine photo-lyase"/>
    <property type="match status" value="1"/>
</dbReference>
<dbReference type="Gene3D" id="1.25.40.80">
    <property type="match status" value="1"/>
</dbReference>
<dbReference type="Gene3D" id="1.10.579.10">
    <property type="entry name" value="DNA Cyclobutane Dipyrimidine Photolyase, subunit A, domain 3"/>
    <property type="match status" value="1"/>
</dbReference>
<dbReference type="Gene3D" id="3.40.50.620">
    <property type="entry name" value="HUPs"/>
    <property type="match status" value="1"/>
</dbReference>
<dbReference type="InterPro" id="IPR036134">
    <property type="entry name" value="Crypto/Photolyase_FAD-like_sf"/>
</dbReference>
<dbReference type="InterPro" id="IPR036155">
    <property type="entry name" value="Crypto/Photolyase_N_sf"/>
</dbReference>
<dbReference type="InterPro" id="IPR005101">
    <property type="entry name" value="Cryptochr/Photolyase_FAD-bd"/>
</dbReference>
<dbReference type="InterPro" id="IPR002081">
    <property type="entry name" value="Cryptochrome/DNA_photolyase_1"/>
</dbReference>
<dbReference type="InterPro" id="IPR014134">
    <property type="entry name" value="Cryptochrome_pln"/>
</dbReference>
<dbReference type="InterPro" id="IPR018394">
    <property type="entry name" value="DNA_photolyase_1_CS_C"/>
</dbReference>
<dbReference type="InterPro" id="IPR006050">
    <property type="entry name" value="DNA_photolyase_N"/>
</dbReference>
<dbReference type="InterPro" id="IPR014729">
    <property type="entry name" value="Rossmann-like_a/b/a_fold"/>
</dbReference>
<dbReference type="NCBIfam" id="TIGR02766">
    <property type="entry name" value="crypt_chrom_pln"/>
    <property type="match status" value="1"/>
</dbReference>
<dbReference type="PANTHER" id="PTHR11455">
    <property type="entry name" value="CRYPTOCHROME"/>
    <property type="match status" value="1"/>
</dbReference>
<dbReference type="PANTHER" id="PTHR11455:SF18">
    <property type="entry name" value="SI:CH1073-390K14.1"/>
    <property type="match status" value="1"/>
</dbReference>
<dbReference type="Pfam" id="PF00875">
    <property type="entry name" value="DNA_photolyase"/>
    <property type="match status" value="1"/>
</dbReference>
<dbReference type="Pfam" id="PF03441">
    <property type="entry name" value="FAD_binding_7"/>
    <property type="match status" value="1"/>
</dbReference>
<dbReference type="PRINTS" id="PR00147">
    <property type="entry name" value="DNAPHOTLYASE"/>
</dbReference>
<dbReference type="SUPFAM" id="SSF48173">
    <property type="entry name" value="Cryptochrome/photolyase FAD-binding domain"/>
    <property type="match status" value="1"/>
</dbReference>
<dbReference type="SUPFAM" id="SSF52425">
    <property type="entry name" value="Cryptochrome/photolyase, N-terminal domain"/>
    <property type="match status" value="1"/>
</dbReference>
<dbReference type="PROSITE" id="PS00394">
    <property type="entry name" value="DNA_PHOTOLYASES_1_1"/>
    <property type="match status" value="1"/>
</dbReference>
<dbReference type="PROSITE" id="PS00691">
    <property type="entry name" value="DNA_PHOTOLYASES_1_2"/>
    <property type="match status" value="1"/>
</dbReference>
<dbReference type="PROSITE" id="PS51645">
    <property type="entry name" value="PHR_CRY_ALPHA_BETA"/>
    <property type="match status" value="1"/>
</dbReference>
<keyword id="KW-0067">ATP-binding</keyword>
<keyword id="KW-0157">Chromophore</keyword>
<keyword id="KW-0274">FAD</keyword>
<keyword id="KW-0285">Flavoprotein</keyword>
<keyword id="KW-0547">Nucleotide-binding</keyword>
<keyword id="KW-0600">Photoreceptor protein</keyword>
<keyword id="KW-0675">Receptor</keyword>
<keyword id="KW-0716">Sensory transduction</keyword>
<evidence type="ECO:0000250" key="1"/>
<evidence type="ECO:0000269" key="2">
    <source>
    </source>
</evidence>
<evidence type="ECO:0000305" key="3"/>
<evidence type="ECO:0000305" key="4">
    <source>
    </source>
</evidence>
<comment type="function">
    <text evidence="1 2">Mediates blue light-induced gene expression in addition to its role in blue light-dependent inhibition of stem growth.</text>
</comment>
<comment type="cofactor">
    <cofactor>
        <name>FAD</name>
        <dbReference type="ChEBI" id="CHEBI:57692"/>
    </cofactor>
    <text>Binds 1 FAD per subunit.</text>
</comment>
<comment type="cofactor">
    <cofactor>
        <name>(6R)-5,10-methylene-5,6,7,8-tetrahydrofolate</name>
        <dbReference type="ChEBI" id="CHEBI:15636"/>
    </cofactor>
    <text>Binds 1 5,10-methenyltetrahydrofolate (MTHF) per subunit.</text>
</comment>
<comment type="subunit">
    <text evidence="1">Homodimer.</text>
</comment>
<comment type="induction">
    <text>By visible light.</text>
</comment>
<comment type="similarity">
    <text evidence="3">Belongs to the DNA photolyase class-1 family.</text>
</comment>
<comment type="caution">
    <text evidence="4">Was originally thought to be a DNA photolyase.</text>
</comment>